<proteinExistence type="inferred from homology"/>
<dbReference type="EC" id="2.7.1.33"/>
<dbReference type="EMBL" id="U12020">
    <property type="protein sequence ID" value="AAA75361.1"/>
    <property type="molecule type" value="Genomic_DNA"/>
</dbReference>
<dbReference type="EMBL" id="BX640411">
    <property type="protein sequence ID" value="CAE40475.1"/>
    <property type="molecule type" value="Genomic_DNA"/>
</dbReference>
<dbReference type="EMBL" id="AF016461">
    <property type="protein sequence ID" value="AAC68834.1"/>
    <property type="molecule type" value="Genomic_DNA"/>
</dbReference>
<dbReference type="EMBL" id="X90711">
    <property type="protein sequence ID" value="CAA62242.1"/>
    <property type="molecule type" value="Genomic_DNA"/>
</dbReference>
<dbReference type="PIR" id="I40327">
    <property type="entry name" value="I40327"/>
</dbReference>
<dbReference type="RefSeq" id="NP_878999.1">
    <property type="nucleotide sequence ID" value="NC_002929.2"/>
</dbReference>
<dbReference type="RefSeq" id="WP_010929617.1">
    <property type="nucleotide sequence ID" value="NZ_CP039022.1"/>
</dbReference>
<dbReference type="SMR" id="Q45338"/>
<dbReference type="STRING" id="257313.BP0097"/>
<dbReference type="PaxDb" id="257313-BP0097"/>
<dbReference type="KEGG" id="bpe:BP0097"/>
<dbReference type="PATRIC" id="fig|257313.5.peg.96"/>
<dbReference type="eggNOG" id="COG1521">
    <property type="taxonomic scope" value="Bacteria"/>
</dbReference>
<dbReference type="HOGENOM" id="CLU_066627_0_0_4"/>
<dbReference type="UniPathway" id="UPA00241">
    <property type="reaction ID" value="UER00352"/>
</dbReference>
<dbReference type="Proteomes" id="UP000002676">
    <property type="component" value="Chromosome"/>
</dbReference>
<dbReference type="GO" id="GO:0005737">
    <property type="term" value="C:cytoplasm"/>
    <property type="evidence" value="ECO:0007669"/>
    <property type="project" value="UniProtKB-SubCell"/>
</dbReference>
<dbReference type="GO" id="GO:0005524">
    <property type="term" value="F:ATP binding"/>
    <property type="evidence" value="ECO:0007669"/>
    <property type="project" value="UniProtKB-UniRule"/>
</dbReference>
<dbReference type="GO" id="GO:0004594">
    <property type="term" value="F:pantothenate kinase activity"/>
    <property type="evidence" value="ECO:0007669"/>
    <property type="project" value="UniProtKB-UniRule"/>
</dbReference>
<dbReference type="GO" id="GO:0015937">
    <property type="term" value="P:coenzyme A biosynthetic process"/>
    <property type="evidence" value="ECO:0007669"/>
    <property type="project" value="UniProtKB-UniRule"/>
</dbReference>
<dbReference type="Gene3D" id="3.30.420.40">
    <property type="match status" value="2"/>
</dbReference>
<dbReference type="HAMAP" id="MF_01274">
    <property type="entry name" value="Pantothen_kinase_3"/>
    <property type="match status" value="1"/>
</dbReference>
<dbReference type="InterPro" id="IPR043129">
    <property type="entry name" value="ATPase_NBD"/>
</dbReference>
<dbReference type="InterPro" id="IPR004619">
    <property type="entry name" value="Type_III_PanK"/>
</dbReference>
<dbReference type="NCBIfam" id="NF009869">
    <property type="entry name" value="PRK13328.1-5"/>
    <property type="match status" value="1"/>
</dbReference>
<dbReference type="PANTHER" id="PTHR34265">
    <property type="entry name" value="TYPE III PANTOTHENATE KINASE"/>
    <property type="match status" value="1"/>
</dbReference>
<dbReference type="PANTHER" id="PTHR34265:SF1">
    <property type="entry name" value="TYPE III PANTOTHENATE KINASE"/>
    <property type="match status" value="1"/>
</dbReference>
<dbReference type="Pfam" id="PF03309">
    <property type="entry name" value="Pan_kinase"/>
    <property type="match status" value="1"/>
</dbReference>
<dbReference type="SUPFAM" id="SSF53067">
    <property type="entry name" value="Actin-like ATPase domain"/>
    <property type="match status" value="2"/>
</dbReference>
<evidence type="ECO:0000250" key="1"/>
<evidence type="ECO:0000255" key="2"/>
<evidence type="ECO:0000305" key="3"/>
<accession>Q45338</accession>
<accession>Q45373</accession>
<keyword id="KW-0067">ATP-binding</keyword>
<keyword id="KW-0173">Coenzyme A biosynthesis</keyword>
<keyword id="KW-0963">Cytoplasm</keyword>
<keyword id="KW-0418">Kinase</keyword>
<keyword id="KW-0547">Nucleotide-binding</keyword>
<keyword id="KW-0630">Potassium</keyword>
<keyword id="KW-1185">Reference proteome</keyword>
<keyword id="KW-0804">Transcription</keyword>
<keyword id="KW-0805">Transcription regulation</keyword>
<keyword id="KW-0808">Transferase</keyword>
<reference key="1">
    <citation type="journal article" date="1995" name="J. Bacteriol.">
        <title>Identification of a Bordetella pertussis regulatory factor required for transcription of the pertussis toxin operon in Escherichia coli.</title>
        <authorList>
            <person name="Deshazer D."/>
            <person name="Wood G.E."/>
            <person name="Friedman R.L."/>
        </authorList>
    </citation>
    <scope>NUCLEOTIDE SEQUENCE [GENOMIC DNA]</scope>
    <source>
        <strain>BP504</strain>
    </source>
</reference>
<reference key="2">
    <citation type="journal article" date="2003" name="Nat. Genet.">
        <title>Comparative analysis of the genome sequences of Bordetella pertussis, Bordetella parapertussis and Bordetella bronchiseptica.</title>
        <authorList>
            <person name="Parkhill J."/>
            <person name="Sebaihia M."/>
            <person name="Preston A."/>
            <person name="Murphy L.D."/>
            <person name="Thomson N.R."/>
            <person name="Harris D.E."/>
            <person name="Holden M.T.G."/>
            <person name="Churcher C.M."/>
            <person name="Bentley S.D."/>
            <person name="Mungall K.L."/>
            <person name="Cerdeno-Tarraga A.-M."/>
            <person name="Temple L."/>
            <person name="James K.D."/>
            <person name="Harris B."/>
            <person name="Quail M.A."/>
            <person name="Achtman M."/>
            <person name="Atkin R."/>
            <person name="Baker S."/>
            <person name="Basham D."/>
            <person name="Bason N."/>
            <person name="Cherevach I."/>
            <person name="Chillingworth T."/>
            <person name="Collins M."/>
            <person name="Cronin A."/>
            <person name="Davis P."/>
            <person name="Doggett J."/>
            <person name="Feltwell T."/>
            <person name="Goble A."/>
            <person name="Hamlin N."/>
            <person name="Hauser H."/>
            <person name="Holroyd S."/>
            <person name="Jagels K."/>
            <person name="Leather S."/>
            <person name="Moule S."/>
            <person name="Norberczak H."/>
            <person name="O'Neil S."/>
            <person name="Ormond D."/>
            <person name="Price C."/>
            <person name="Rabbinowitsch E."/>
            <person name="Rutter S."/>
            <person name="Sanders M."/>
            <person name="Saunders D."/>
            <person name="Seeger K."/>
            <person name="Sharp S."/>
            <person name="Simmonds M."/>
            <person name="Skelton J."/>
            <person name="Squares R."/>
            <person name="Squares S."/>
            <person name="Stevens K."/>
            <person name="Unwin L."/>
            <person name="Whitehead S."/>
            <person name="Barrell B.G."/>
            <person name="Maskell D.J."/>
        </authorList>
    </citation>
    <scope>NUCLEOTIDE SEQUENCE [LARGE SCALE GENOMIC DNA]</scope>
    <source>
        <strain>Tohama I / ATCC BAA-589 / NCTC 13251</strain>
    </source>
</reference>
<reference key="3">
    <citation type="submission" date="1997-07" db="EMBL/GenBank/DDBJ databases">
        <title>Identification of a birA homolog in Bordetella pertussis.</title>
        <authorList>
            <person name="Wood G.E."/>
            <person name="Friedman R.L."/>
        </authorList>
    </citation>
    <scope>NUCLEOTIDE SEQUENCE [GENOMIC DNA] OF 1-38</scope>
    <source>
        <strain>BP504</strain>
    </source>
</reference>
<reference key="4">
    <citation type="journal article" date="1996" name="Mol. Microbiol.">
        <title>The identification, cloning and mutagenesis of a genetic locus required for lipopolysaccharide biosynthesis in Bordetella pertussis.</title>
        <authorList>
            <person name="Allen A.G."/>
            <person name="Maskell D.J."/>
        </authorList>
    </citation>
    <scope>NUCLEOTIDE SEQUENCE [GENOMIC DNA] OF 239-267</scope>
    <source>
        <strain>BP536</strain>
    </source>
</reference>
<protein>
    <recommendedName>
        <fullName>Type III pantothenate kinase</fullName>
        <ecNumber>2.7.1.33</ecNumber>
    </recommendedName>
    <alternativeName>
        <fullName>Bvg accessory factor</fullName>
    </alternativeName>
    <alternativeName>
        <fullName>PanK-III</fullName>
    </alternativeName>
    <alternativeName>
        <fullName>Pantothenic acid kinase</fullName>
    </alternativeName>
</protein>
<organism>
    <name type="scientific">Bordetella pertussis (strain Tohama I / ATCC BAA-589 / NCTC 13251)</name>
    <dbReference type="NCBI Taxonomy" id="257313"/>
    <lineage>
        <taxon>Bacteria</taxon>
        <taxon>Pseudomonadati</taxon>
        <taxon>Pseudomonadota</taxon>
        <taxon>Betaproteobacteria</taxon>
        <taxon>Burkholderiales</taxon>
        <taxon>Alcaligenaceae</taxon>
        <taxon>Bordetella</taxon>
    </lineage>
</organism>
<comment type="function">
    <text evidence="1">Catalyzes the phosphorylation of pantothenate (Pan), the first step in CoA biosynthesis.</text>
</comment>
<comment type="function">
    <text>Activates transcription of the pertussis toxin operon in a BvgAS-dependent manner. May interact with the alpha subunit of RNA polymerase.</text>
</comment>
<comment type="catalytic activity">
    <reaction>
        <text>(R)-pantothenate + ATP = (R)-4'-phosphopantothenate + ADP + H(+)</text>
        <dbReference type="Rhea" id="RHEA:16373"/>
        <dbReference type="ChEBI" id="CHEBI:10986"/>
        <dbReference type="ChEBI" id="CHEBI:15378"/>
        <dbReference type="ChEBI" id="CHEBI:29032"/>
        <dbReference type="ChEBI" id="CHEBI:30616"/>
        <dbReference type="ChEBI" id="CHEBI:456216"/>
        <dbReference type="EC" id="2.7.1.33"/>
    </reaction>
</comment>
<comment type="cofactor">
    <cofactor evidence="1">
        <name>NH4(+)</name>
        <dbReference type="ChEBI" id="CHEBI:28938"/>
    </cofactor>
    <cofactor evidence="1">
        <name>K(+)</name>
        <dbReference type="ChEBI" id="CHEBI:29103"/>
    </cofactor>
    <text evidence="1">A monovalent cation. Ammonium or potassium.</text>
</comment>
<comment type="pathway">
    <text>Cofactor biosynthesis; coenzyme A biosynthesis; CoA from (R)-pantothenate: step 1/5.</text>
</comment>
<comment type="subunit">
    <text evidence="1">Homodimer.</text>
</comment>
<comment type="subcellular location">
    <subcellularLocation>
        <location evidence="1">Cytoplasm</location>
    </subcellularLocation>
</comment>
<comment type="similarity">
    <text evidence="3">Belongs to the type III pantothenate kinase family.</text>
</comment>
<feature type="chain" id="PRO_0000064809" description="Type III pantothenate kinase">
    <location>
        <begin position="1"/>
        <end position="267"/>
    </location>
</feature>
<feature type="active site" description="Proton acceptor" evidence="2">
    <location>
        <position position="105"/>
    </location>
</feature>
<feature type="binding site" evidence="1">
    <location>
        <begin position="6"/>
        <end position="13"/>
    </location>
    <ligand>
        <name>ATP</name>
        <dbReference type="ChEBI" id="CHEBI:30616"/>
    </ligand>
</feature>
<feature type="binding site" evidence="1">
    <location>
        <position position="96"/>
    </location>
    <ligand>
        <name>substrate</name>
    </ligand>
</feature>
<feature type="binding site" evidence="1">
    <location>
        <begin position="103"/>
        <end position="106"/>
    </location>
    <ligand>
        <name>substrate</name>
    </ligand>
</feature>
<feature type="binding site" evidence="2">
    <location>
        <position position="131"/>
    </location>
    <ligand>
        <name>ATP</name>
        <dbReference type="ChEBI" id="CHEBI:30616"/>
    </ligand>
</feature>
<feature type="binding site" evidence="1">
    <location>
        <position position="181"/>
    </location>
    <ligand>
        <name>substrate</name>
    </ligand>
</feature>
<sequence length="267" mass="27845">MIILIDSGNSRLKVGWFDPDAPQAAREPAPVAFDNLDLDALGRWLATLPRRPQRALGVNVAGLARGEAIAATLRAGGCDIRWLRAQPLAMGLRNGYRNPDQLGADRWACMVGVLARQPSVHPPLLVASFGTATTLDTIGPDNVFPGGLILPGPAMMRGALAYGTAHLPLADGLVADYPIDTHQAIASGIAAAQAGAIVRQWLAGRQRYGQAPEIYVAGGGWPEVRQEAERLLAVTGAAFGATPQPTYLDSPVLDGLAALAAQGAPTA</sequence>
<gene>
    <name type="primary">coaX</name>
    <name type="synonym">baf</name>
    <name type="ordered locus">BP0097</name>
</gene>
<name>COAX_BORPE</name>